<gene>
    <name evidence="8" type="primary">Txnrd1</name>
    <name type="synonym">Trxr1</name>
</gene>
<evidence type="ECO:0000250" key="1">
    <source>
        <dbReference type="UniProtKB" id="Q16881"/>
    </source>
</evidence>
<evidence type="ECO:0000250" key="2">
    <source>
        <dbReference type="UniProtKB" id="Q9JMH6"/>
    </source>
</evidence>
<evidence type="ECO:0000269" key="3">
    <source>
    </source>
</evidence>
<evidence type="ECO:0000269" key="4">
    <source>
    </source>
</evidence>
<evidence type="ECO:0000305" key="5"/>
<evidence type="ECO:0000305" key="6">
    <source>
    </source>
</evidence>
<evidence type="ECO:0000305" key="7">
    <source>
    </source>
</evidence>
<evidence type="ECO:0000312" key="8">
    <source>
        <dbReference type="RGD" id="61959"/>
    </source>
</evidence>
<evidence type="ECO:0007744" key="9">
    <source>
        <dbReference type="PDB" id="1H6V"/>
    </source>
</evidence>
<evidence type="ECO:0007829" key="10">
    <source>
        <dbReference type="PDB" id="3EAO"/>
    </source>
</evidence>
<evidence type="ECO:0007829" key="11">
    <source>
        <dbReference type="PDB" id="4KPR"/>
    </source>
</evidence>
<proteinExistence type="evidence at protein level"/>
<sequence>MNDSKDAPKSYDFDLIIIGGGSGGLAAAKEAAKFDKKVMVLDFVTPTPLGTRWGLGGTCVNVGCIPKKLMHQAALLGQALKDSRNYGWKLEDTVKHDWEKMTESVQNHIGSLNWGYRVALREKKVVYENAYGKFIGPHKIMATNNKGKEKVYSAERFLIATGERPRYLGIPGDKEYCISSDDLFSLPYCPGKTLVVGASYVALECAGFLAGIGLDVTVMVRSILLRGFDQDMANKIGEHMEEHGIKFIRQFVPTKIEQIEAGTPGRLKVTAKSTNSEETIEDEFNTVLLAVGRDSCTRTIGLETVGVKINEKTGKIPVTDEEQTNVPYIYAIGDILEGKLELTPVAIQAGRLLAQRLYGGSTVKCDYDNVPTTVFTPLEYGCCGLSEEKAVEKFGEENIEVYHSFFWPLEWTVPSRDNNKCYAKVICNLKDNERVVGFHVLGPNAGEVTQGFAAALKCGLTKQQLDSTIGIHPVCAEIFTTLSVTKRSGGDILQSGCUG</sequence>
<protein>
    <recommendedName>
        <fullName evidence="5">Thioredoxin reductase 1, cytoplasmic</fullName>
        <shortName>TR</shortName>
        <ecNumber evidence="3">1.8.1.9</ecNumber>
    </recommendedName>
    <alternativeName>
        <fullName>NADPH-dependent thioredoxin reductase</fullName>
    </alternativeName>
    <alternativeName>
        <fullName evidence="6">Peroxidase TXNRD1</fullName>
        <ecNumber evidence="3">1.11.1.2</ecNumber>
    </alternativeName>
    <alternativeName>
        <fullName>Thioredoxin reductase TR1</fullName>
    </alternativeName>
</protein>
<keyword id="KW-0002">3D-structure</keyword>
<keyword id="KW-0963">Cytoplasm</keyword>
<keyword id="KW-0903">Direct protein sequencing</keyword>
<keyword id="KW-1015">Disulfide bond</keyword>
<keyword id="KW-0274">FAD</keyword>
<keyword id="KW-0285">Flavoprotein</keyword>
<keyword id="KW-0521">NADP</keyword>
<keyword id="KW-0560">Oxidoreductase</keyword>
<keyword id="KW-0597">Phosphoprotein</keyword>
<keyword id="KW-0676">Redox-active center</keyword>
<keyword id="KW-1185">Reference proteome</keyword>
<keyword id="KW-0712">Selenocysteine</keyword>
<keyword id="KW-0832">Ubl conjugation</keyword>
<comment type="function">
    <text evidence="3">Reduces disulfideprotein thioredoxin (Trx) to its dithiol-containing form. Homodimeric flavoprotein involved in the regulation of cellular redox reactions, growth and differentiation. Contains a selenocysteine residue at the C-terminal active site that is essential for catalysis (PubMed:10849437). Also has reductase activity on hydrogen peroxide (H2O2) (PubMed:10849437).</text>
</comment>
<comment type="catalytic activity">
    <reaction evidence="3">
        <text>[thioredoxin]-dithiol + NADP(+) = [thioredoxin]-disulfide + NADPH + H(+)</text>
        <dbReference type="Rhea" id="RHEA:20345"/>
        <dbReference type="Rhea" id="RHEA-COMP:10698"/>
        <dbReference type="Rhea" id="RHEA-COMP:10700"/>
        <dbReference type="ChEBI" id="CHEBI:15378"/>
        <dbReference type="ChEBI" id="CHEBI:29950"/>
        <dbReference type="ChEBI" id="CHEBI:50058"/>
        <dbReference type="ChEBI" id="CHEBI:57783"/>
        <dbReference type="ChEBI" id="CHEBI:58349"/>
        <dbReference type="EC" id="1.8.1.9"/>
    </reaction>
    <physiologicalReaction direction="right-to-left" evidence="3">
        <dbReference type="Rhea" id="RHEA:20347"/>
    </physiologicalReaction>
</comment>
<comment type="catalytic activity">
    <reaction evidence="3">
        <text>H2O2 + NADPH + H(+) = NADP(+) + 2 H2O</text>
        <dbReference type="Rhea" id="RHEA:15173"/>
        <dbReference type="ChEBI" id="CHEBI:15377"/>
        <dbReference type="ChEBI" id="CHEBI:15378"/>
        <dbReference type="ChEBI" id="CHEBI:16240"/>
        <dbReference type="ChEBI" id="CHEBI:57783"/>
        <dbReference type="ChEBI" id="CHEBI:58349"/>
        <dbReference type="EC" id="1.11.1.2"/>
    </reaction>
    <physiologicalReaction direction="left-to-right" evidence="6">
        <dbReference type="Rhea" id="RHEA:15174"/>
    </physiologicalReaction>
</comment>
<comment type="cofactor">
    <cofactor evidence="3 4">
        <name>FAD</name>
        <dbReference type="ChEBI" id="CHEBI:57692"/>
    </cofactor>
    <text evidence="4">Binds 1 FAD per subunit.</text>
</comment>
<comment type="biophysicochemical properties">
    <kinetics>
        <KM evidence="3">3.3 uM for thioredoxin</KM>
        <text evidence="3">kcat is 2500 min(-1) with thioredoxin as substrate.</text>
    </kinetics>
    <phDependence>
        <text evidence="3">Optimum pH is 7.5.</text>
    </phDependence>
</comment>
<comment type="subunit">
    <text evidence="4">Homodimer.</text>
</comment>
<comment type="subcellular location">
    <subcellularLocation>
        <location evidence="1">Cytoplasm</location>
    </subcellularLocation>
</comment>
<comment type="PTM">
    <text evidence="1">ISGylated.</text>
</comment>
<comment type="miscellaneous">
    <text evidence="3 4">The active site is a redox-active disulfide bond. The selenocysteine residue is also essential for catalytic activity.</text>
</comment>
<comment type="similarity">
    <text evidence="5">Belongs to the class-I pyridine nucleotide-disulfide oxidoreductase family.</text>
</comment>
<comment type="sequence caution" evidence="5">
    <conflict type="erroneous termination">
        <sequence resource="EMBL-CDS" id="AAD43039"/>
    </conflict>
    <text>Truncated C-terminus.</text>
</comment>
<comment type="sequence caution" evidence="5">
    <conflict type="erroneous initiation">
        <sequence resource="EMBL-CDS" id="AAH85726"/>
    </conflict>
    <text>Extended N-terminus.</text>
</comment>
<reference key="1">
    <citation type="journal article" date="1998" name="J. Biol. Chem.">
        <title>Rat and calf thioredoxin reductase are homologous to glutathione reductase with a carboxyl-terminal elongation containing a conserved catalytically active penultimate selenocysteine residue.</title>
        <authorList>
            <person name="Zhong L."/>
            <person name="Arner E.S.J."/>
            <person name="Ljung J."/>
            <person name="Aaslund F."/>
            <person name="Holmgren A."/>
        </authorList>
    </citation>
    <scope>NUCLEOTIDE SEQUENCE [MRNA]</scope>
    <source>
        <tissue>Neuroblastoma</tissue>
    </source>
</reference>
<reference key="2">
    <citation type="journal article" date="1999" name="Biochem. J.">
        <title>Functional expression of rat thioredoxin reductase: selenocysteine insertion sequence element is essential for the active enzyme.</title>
        <authorList>
            <person name="Fujiwara N."/>
            <person name="Fujii T."/>
            <person name="Fujii J."/>
            <person name="Taniguchi N."/>
        </authorList>
    </citation>
    <scope>NUCLEOTIDE SEQUENCE [MRNA]</scope>
    <scope>SELENOCYSTEINE AT SEC-498</scope>
    <source>
        <tissue>Kidney</tissue>
        <tissue>Liver</tissue>
    </source>
</reference>
<reference key="3">
    <citation type="submission" date="2000-01" db="EMBL/GenBank/DDBJ databases">
        <title>Molecular cloning of thioredoxin reductase 1 from rat liver.</title>
        <authorList>
            <person name="Rundlof A."/>
            <person name="Arner E.S.J."/>
        </authorList>
    </citation>
    <scope>NUCLEOTIDE SEQUENCE [MRNA]</scope>
    <source>
        <tissue>Liver</tissue>
    </source>
</reference>
<reference key="4">
    <citation type="journal article" date="2004" name="Genome Res.">
        <title>The status, quality, and expansion of the NIH full-length cDNA project: the Mammalian Gene Collection (MGC).</title>
        <authorList>
            <consortium name="The MGC Project Team"/>
        </authorList>
    </citation>
    <scope>NUCLEOTIDE SEQUENCE [LARGE SCALE MRNA]</scope>
</reference>
<reference key="5">
    <citation type="journal article" date="2000" name="J. Biol. Chem.">
        <title>Essential role of selenium in the catalytic activities of mammalian thioredoxin reductase revealed by characterization of recombinant enzymes with selenocysteine mutations.</title>
        <authorList>
            <person name="Zhong L."/>
            <person name="Holmgren A."/>
        </authorList>
    </citation>
    <scope>PROTEIN SEQUENCE OF 1-20; 56-67; 101-116; 316-335; 365-384; 425-430; 435-459 AND 488-499</scope>
    <scope>FUNCTION</scope>
    <scope>MUTAGENESIS OF SEC-498</scope>
    <scope>CHARACTERIZATION</scope>
    <scope>CATALYTIC ACTIVITY</scope>
    <scope>COFACTOR</scope>
    <scope>BIOPHYSICOCHEMICAL PROPERTIES</scope>
</reference>
<reference evidence="9" key="6">
    <citation type="journal article" date="2001" name="Proc. Natl. Acad. Sci. U.S.A.">
        <title>Three-dimensional structure of a mammalian thioredoxin reductase: implications for mechanism and evolution of a selenocysteine-dependent enzyme.</title>
        <authorList>
            <person name="Sandalova T."/>
            <person name="Zhong L."/>
            <person name="Lindqvist Y."/>
            <person name="Holmgren A."/>
            <person name="Schneider G."/>
        </authorList>
    </citation>
    <scope>X-RAY CRYSTALLOGRAPHY (3.0 ANGSTROMS) OF MUTANT CYS-498 IN COMPLEX WITH FAD AND NADP</scope>
    <scope>DISULFIDE BOND</scope>
    <scope>HOMODIMERIZATION</scope>
    <scope>COFACTOR</scope>
</reference>
<feature type="chain" id="PRO_0000067985" description="Thioredoxin reductase 1, cytoplasmic">
    <location>
        <begin position="1"/>
        <end position="499"/>
    </location>
</feature>
<feature type="active site" description="Proton acceptor">
    <location>
        <position position="472"/>
    </location>
</feature>
<feature type="binding site" evidence="9">
    <location>
        <begin position="18"/>
        <end position="23"/>
    </location>
    <ligand>
        <name>FAD</name>
        <dbReference type="ChEBI" id="CHEBI:57692"/>
    </ligand>
</feature>
<feature type="binding site" evidence="9">
    <location>
        <begin position="42"/>
        <end position="43"/>
    </location>
    <ligand>
        <name>FAD</name>
        <dbReference type="ChEBI" id="CHEBI:57692"/>
    </ligand>
</feature>
<feature type="binding site" evidence="1">
    <location>
        <begin position="58"/>
        <end position="59"/>
    </location>
    <ligand>
        <name>FAD</name>
        <dbReference type="ChEBI" id="CHEBI:57692"/>
    </ligand>
</feature>
<feature type="binding site" evidence="9">
    <location>
        <begin position="63"/>
        <end position="67"/>
    </location>
    <ligand>
        <name>FAD</name>
        <dbReference type="ChEBI" id="CHEBI:57692"/>
    </ligand>
</feature>
<feature type="binding site" evidence="9">
    <location>
        <begin position="131"/>
        <end position="132"/>
    </location>
    <ligand>
        <name>FAD</name>
        <dbReference type="ChEBI" id="CHEBI:57692"/>
    </ligand>
</feature>
<feature type="binding site" evidence="9">
    <location>
        <position position="161"/>
    </location>
    <ligand>
        <name>FAD</name>
        <dbReference type="ChEBI" id="CHEBI:57692"/>
    </ligand>
</feature>
<feature type="binding site" evidence="9">
    <location>
        <position position="166"/>
    </location>
    <ligand>
        <name>NADP(+)</name>
        <dbReference type="ChEBI" id="CHEBI:58349"/>
    </ligand>
</feature>
<feature type="binding site" evidence="9">
    <location>
        <begin position="198"/>
        <end position="204"/>
    </location>
    <ligand>
        <name>NADP(+)</name>
        <dbReference type="ChEBI" id="CHEBI:58349"/>
    </ligand>
</feature>
<feature type="binding site" evidence="1">
    <location>
        <position position="200"/>
    </location>
    <ligand>
        <name>FAD</name>
        <dbReference type="ChEBI" id="CHEBI:57692"/>
    </ligand>
</feature>
<feature type="binding site" evidence="9">
    <location>
        <begin position="221"/>
        <end position="222"/>
    </location>
    <ligand>
        <name>NADP(+)</name>
        <dbReference type="ChEBI" id="CHEBI:58349"/>
    </ligand>
</feature>
<feature type="binding site" evidence="1">
    <location>
        <begin position="226"/>
        <end position="228"/>
    </location>
    <ligand>
        <name>NADP(+)</name>
        <dbReference type="ChEBI" id="CHEBI:58349"/>
    </ligand>
</feature>
<feature type="binding site" evidence="9">
    <location>
        <position position="226"/>
    </location>
    <ligand>
        <name>NADP(+)</name>
        <dbReference type="ChEBI" id="CHEBI:58349"/>
    </ligand>
</feature>
<feature type="binding site" evidence="9">
    <location>
        <begin position="291"/>
        <end position="293"/>
    </location>
    <ligand>
        <name>NADP(+)</name>
        <dbReference type="ChEBI" id="CHEBI:58349"/>
    </ligand>
</feature>
<feature type="binding site" evidence="1">
    <location>
        <position position="315"/>
    </location>
    <ligand>
        <name>NADP(+)</name>
        <dbReference type="ChEBI" id="CHEBI:58349"/>
    </ligand>
</feature>
<feature type="binding site" evidence="9">
    <location>
        <position position="334"/>
    </location>
    <ligand>
        <name>FAD</name>
        <dbReference type="ChEBI" id="CHEBI:57692"/>
    </ligand>
</feature>
<feature type="binding site" evidence="9">
    <location>
        <begin position="341"/>
        <end position="343"/>
    </location>
    <ligand>
        <name>FAD</name>
        <dbReference type="ChEBI" id="CHEBI:57692"/>
    </ligand>
</feature>
<feature type="binding site" evidence="9">
    <location>
        <position position="341"/>
    </location>
    <ligand>
        <name>NADP(+)</name>
        <dbReference type="ChEBI" id="CHEBI:58349"/>
    </ligand>
</feature>
<feature type="binding site" evidence="9">
    <location>
        <position position="472"/>
    </location>
    <ligand>
        <name>FAD</name>
        <dbReference type="ChEBI" id="CHEBI:57692"/>
    </ligand>
</feature>
<feature type="non-standard amino acid" description="Selenocysteine" evidence="6 7">
    <location>
        <position position="498"/>
    </location>
</feature>
<feature type="modified residue" description="N6-succinyllysine" evidence="2">
    <location>
        <position position="68"/>
    </location>
</feature>
<feature type="modified residue" description="Phosphotyrosine" evidence="1">
    <location>
        <position position="131"/>
    </location>
</feature>
<feature type="disulfide bond" description="Redox-active" evidence="4">
    <location>
        <begin position="59"/>
        <end position="64"/>
    </location>
</feature>
<feature type="cross-link" description="Cysteinyl-selenocysteine (Cys-Sec)">
    <location>
        <begin position="497"/>
        <end position="498"/>
    </location>
</feature>
<feature type="mutagenesis site" description="Loss of activity." evidence="3">
    <original>U</original>
    <variation>S</variation>
    <location>
        <position position="498"/>
    </location>
</feature>
<feature type="mutagenesis site" description="Loss of activity." evidence="3">
    <location>
        <position position="498"/>
    </location>
</feature>
<feature type="sequence conflict" description="In Ref. 1; AAC35244, 2; AAD43039 and 3; AAF32362." evidence="5" ref="1 2 3">
    <original>RW</original>
    <variation>NG</variation>
    <location>
        <begin position="52"/>
        <end position="53"/>
    </location>
</feature>
<feature type="sequence conflict" description="In Ref. 4; AAH85726." evidence="5" ref="4">
    <original>I</original>
    <variation>V</variation>
    <location>
        <position position="426"/>
    </location>
</feature>
<feature type="sequence conflict" description="In Ref. 2; AAD43039 and 3; AAF32362." evidence="5" ref="2 3">
    <original>GFAAA</original>
    <variation>ALQP</variation>
    <location>
        <begin position="451"/>
        <end position="455"/>
    </location>
</feature>
<feature type="strand" evidence="11">
    <location>
        <begin position="12"/>
        <end position="18"/>
    </location>
</feature>
<feature type="helix" evidence="11">
    <location>
        <begin position="22"/>
        <end position="33"/>
    </location>
</feature>
<feature type="strand" evidence="11">
    <location>
        <begin position="38"/>
        <end position="41"/>
    </location>
</feature>
<feature type="helix" evidence="11">
    <location>
        <begin position="57"/>
        <end position="62"/>
    </location>
</feature>
<feature type="helix" evidence="11">
    <location>
        <begin position="64"/>
        <end position="83"/>
    </location>
</feature>
<feature type="turn" evidence="11">
    <location>
        <begin position="84"/>
        <end position="87"/>
    </location>
</feature>
<feature type="helix" evidence="11">
    <location>
        <begin position="98"/>
        <end position="122"/>
    </location>
</feature>
<feature type="strand" evidence="11">
    <location>
        <begin position="126"/>
        <end position="128"/>
    </location>
</feature>
<feature type="strand" evidence="11">
    <location>
        <begin position="130"/>
        <end position="136"/>
    </location>
</feature>
<feature type="strand" evidence="11">
    <location>
        <begin position="139"/>
        <end position="143"/>
    </location>
</feature>
<feature type="strand" evidence="11">
    <location>
        <begin position="149"/>
        <end position="159"/>
    </location>
</feature>
<feature type="strand" evidence="11">
    <location>
        <begin position="163"/>
        <end position="165"/>
    </location>
</feature>
<feature type="strand" evidence="10">
    <location>
        <begin position="169"/>
        <end position="172"/>
    </location>
</feature>
<feature type="helix" evidence="11">
    <location>
        <begin position="173"/>
        <end position="176"/>
    </location>
</feature>
<feature type="helix" evidence="11">
    <location>
        <begin position="180"/>
        <end position="183"/>
    </location>
</feature>
<feature type="strand" evidence="11">
    <location>
        <begin position="192"/>
        <end position="196"/>
    </location>
</feature>
<feature type="helix" evidence="11">
    <location>
        <begin position="200"/>
        <end position="211"/>
    </location>
</feature>
<feature type="strand" evidence="11">
    <location>
        <begin position="216"/>
        <end position="222"/>
    </location>
</feature>
<feature type="helix" evidence="11">
    <location>
        <begin position="230"/>
        <end position="242"/>
    </location>
</feature>
<feature type="strand" evidence="11">
    <location>
        <begin position="246"/>
        <end position="260"/>
    </location>
</feature>
<feature type="strand" evidence="11">
    <location>
        <begin position="266"/>
        <end position="277"/>
    </location>
</feature>
<feature type="strand" evidence="11">
    <location>
        <begin position="279"/>
        <end position="289"/>
    </location>
</feature>
<feature type="strand" evidence="11">
    <location>
        <begin position="293"/>
        <end position="296"/>
    </location>
</feature>
<feature type="strand" evidence="11">
    <location>
        <begin position="298"/>
        <end position="300"/>
    </location>
</feature>
<feature type="helix" evidence="11">
    <location>
        <begin position="302"/>
        <end position="304"/>
    </location>
</feature>
<feature type="turn" evidence="11">
    <location>
        <begin position="311"/>
        <end position="313"/>
    </location>
</feature>
<feature type="strand" evidence="11">
    <location>
        <begin position="329"/>
        <end position="331"/>
    </location>
</feature>
<feature type="helix" evidence="11">
    <location>
        <begin position="333"/>
        <end position="335"/>
    </location>
</feature>
<feature type="helix" evidence="11">
    <location>
        <begin position="343"/>
        <end position="358"/>
    </location>
</feature>
<feature type="strand" evidence="11">
    <location>
        <begin position="372"/>
        <end position="374"/>
    </location>
</feature>
<feature type="strand" evidence="11">
    <location>
        <begin position="376"/>
        <end position="378"/>
    </location>
</feature>
<feature type="strand" evidence="11">
    <location>
        <begin position="380"/>
        <end position="384"/>
    </location>
</feature>
<feature type="helix" evidence="11">
    <location>
        <begin position="387"/>
        <end position="394"/>
    </location>
</feature>
<feature type="helix" evidence="11">
    <location>
        <begin position="396"/>
        <end position="398"/>
    </location>
</feature>
<feature type="strand" evidence="11">
    <location>
        <begin position="399"/>
        <end position="406"/>
    </location>
</feature>
<feature type="helix" evidence="11">
    <location>
        <begin position="409"/>
        <end position="411"/>
    </location>
</feature>
<feature type="turn" evidence="11">
    <location>
        <begin position="412"/>
        <end position="415"/>
    </location>
</feature>
<feature type="strand" evidence="11">
    <location>
        <begin position="421"/>
        <end position="428"/>
    </location>
</feature>
<feature type="helix" evidence="11">
    <location>
        <begin position="429"/>
        <end position="431"/>
    </location>
</feature>
<feature type="strand" evidence="11">
    <location>
        <begin position="434"/>
        <end position="442"/>
    </location>
</feature>
<feature type="helix" evidence="11">
    <location>
        <begin position="445"/>
        <end position="457"/>
    </location>
</feature>
<feature type="helix" evidence="11">
    <location>
        <begin position="462"/>
        <end position="467"/>
    </location>
</feature>
<feature type="helix" evidence="11">
    <location>
        <begin position="475"/>
        <end position="480"/>
    </location>
</feature>
<feature type="turn" evidence="11">
    <location>
        <begin position="486"/>
        <end position="489"/>
    </location>
</feature>
<accession>O89049</accession>
<accession>Q5U344</accession>
<accession>Q9JKZ3</accession>
<accession>Q9JKZ4</accession>
<accession>Q9R1I3</accession>
<name>TRXR1_RAT</name>
<dbReference type="EC" id="1.8.1.9" evidence="3"/>
<dbReference type="EC" id="1.11.1.2" evidence="3"/>
<dbReference type="EMBL" id="U63923">
    <property type="protein sequence ID" value="AAC35244.2"/>
    <property type="molecule type" value="mRNA"/>
</dbReference>
<dbReference type="EMBL" id="AF108213">
    <property type="protein sequence ID" value="AAD43039.1"/>
    <property type="status" value="ALT_SEQ"/>
    <property type="molecule type" value="mRNA"/>
</dbReference>
<dbReference type="EMBL" id="AF220760">
    <property type="protein sequence ID" value="AAF32362.1"/>
    <property type="molecule type" value="mRNA"/>
</dbReference>
<dbReference type="EMBL" id="AF220761">
    <property type="protein sequence ID" value="AAF32363.1"/>
    <property type="molecule type" value="mRNA"/>
</dbReference>
<dbReference type="EMBL" id="BC085726">
    <property type="protein sequence ID" value="AAH85726.1"/>
    <property type="status" value="ALT_INIT"/>
    <property type="molecule type" value="mRNA"/>
</dbReference>
<dbReference type="PDB" id="1H6V">
    <property type="method" value="X-ray"/>
    <property type="resolution" value="3.00 A"/>
    <property type="chains" value="A/B/C/D/E/F=1-499"/>
</dbReference>
<dbReference type="PDB" id="3EAN">
    <property type="method" value="X-ray"/>
    <property type="resolution" value="2.75 A"/>
    <property type="chains" value="A/B/C/D/E/F=1-499"/>
</dbReference>
<dbReference type="PDB" id="3EAO">
    <property type="method" value="X-ray"/>
    <property type="resolution" value="3.10 A"/>
    <property type="chains" value="A/B/C/D/E/F=1-499"/>
</dbReference>
<dbReference type="PDB" id="4KPR">
    <property type="method" value="X-ray"/>
    <property type="resolution" value="2.40 A"/>
    <property type="chains" value="A/B/E/F=1-499"/>
</dbReference>
<dbReference type="PDBsum" id="1H6V"/>
<dbReference type="PDBsum" id="3EAN"/>
<dbReference type="PDBsum" id="3EAO"/>
<dbReference type="PDBsum" id="4KPR"/>
<dbReference type="SMR" id="O89049"/>
<dbReference type="BioGRID" id="248626">
    <property type="interactions" value="1"/>
</dbReference>
<dbReference type="FunCoup" id="O89049">
    <property type="interactions" value="2132"/>
</dbReference>
<dbReference type="STRING" id="10116.ENSRNOP00000013612"/>
<dbReference type="BindingDB" id="O89049"/>
<dbReference type="ChEMBL" id="CHEMBL6035"/>
<dbReference type="iPTMnet" id="O89049"/>
<dbReference type="PhosphoSitePlus" id="O89049"/>
<dbReference type="jPOST" id="O89049"/>
<dbReference type="PaxDb" id="10116-ENSRNOP00000013612"/>
<dbReference type="PeptideAtlas" id="O89049"/>
<dbReference type="UCSC" id="RGD:61959">
    <property type="organism name" value="rat"/>
</dbReference>
<dbReference type="AGR" id="RGD:61959"/>
<dbReference type="RGD" id="61959">
    <property type="gene designation" value="Txnrd1"/>
</dbReference>
<dbReference type="eggNOG" id="KOG4716">
    <property type="taxonomic scope" value="Eukaryota"/>
</dbReference>
<dbReference type="InParanoid" id="O89049"/>
<dbReference type="OrthoDB" id="5956163at2759"/>
<dbReference type="BioCyc" id="MetaCyc:MONOMER-15194"/>
<dbReference type="BRENDA" id="1.8.1.9">
    <property type="organism ID" value="5301"/>
</dbReference>
<dbReference type="Reactome" id="R-RNO-3299685">
    <property type="pathway name" value="Detoxification of Reactive Oxygen Species"/>
</dbReference>
<dbReference type="Reactome" id="R-RNO-499943">
    <property type="pathway name" value="Interconversion of nucleotide di- and triphosphates"/>
</dbReference>
<dbReference type="Reactome" id="R-RNO-5263617">
    <property type="pathway name" value="Metabolism of ingested MeSeO2H into MeSeH"/>
</dbReference>
<dbReference type="Reactome" id="R-RNO-5628897">
    <property type="pathway name" value="TP53 Regulates Metabolic Genes"/>
</dbReference>
<dbReference type="SABIO-RK" id="O89049"/>
<dbReference type="EvolutionaryTrace" id="O89049"/>
<dbReference type="PRO" id="PR:O89049"/>
<dbReference type="Proteomes" id="UP000002494">
    <property type="component" value="Unplaced"/>
</dbReference>
<dbReference type="GO" id="GO:0005737">
    <property type="term" value="C:cytoplasm"/>
    <property type="evidence" value="ECO:0000266"/>
    <property type="project" value="RGD"/>
</dbReference>
<dbReference type="GO" id="GO:0005829">
    <property type="term" value="C:cytosol"/>
    <property type="evidence" value="ECO:0000266"/>
    <property type="project" value="RGD"/>
</dbReference>
<dbReference type="GO" id="GO:0005739">
    <property type="term" value="C:mitochondrion"/>
    <property type="evidence" value="ECO:0000318"/>
    <property type="project" value="GO_Central"/>
</dbReference>
<dbReference type="GO" id="GO:0043025">
    <property type="term" value="C:neuronal cell body"/>
    <property type="evidence" value="ECO:0000314"/>
    <property type="project" value="RGD"/>
</dbReference>
<dbReference type="GO" id="GO:0005634">
    <property type="term" value="C:nucleus"/>
    <property type="evidence" value="ECO:0000266"/>
    <property type="project" value="RGD"/>
</dbReference>
<dbReference type="GO" id="GO:0071949">
    <property type="term" value="F:FAD binding"/>
    <property type="evidence" value="ECO:0000250"/>
    <property type="project" value="UniProtKB"/>
</dbReference>
<dbReference type="GO" id="GO:0042802">
    <property type="term" value="F:identical protein binding"/>
    <property type="evidence" value="ECO:0000353"/>
    <property type="project" value="RGD"/>
</dbReference>
<dbReference type="GO" id="GO:0045340">
    <property type="term" value="F:mercury ion binding"/>
    <property type="evidence" value="ECO:0000314"/>
    <property type="project" value="RGD"/>
</dbReference>
<dbReference type="GO" id="GO:0016174">
    <property type="term" value="F:NAD(P)H oxidase H2O2-forming activity"/>
    <property type="evidence" value="ECO:0000314"/>
    <property type="project" value="RGD"/>
</dbReference>
<dbReference type="GO" id="GO:0050137">
    <property type="term" value="F:NADPH peroxidase activity"/>
    <property type="evidence" value="ECO:0000314"/>
    <property type="project" value="UniProtKB"/>
</dbReference>
<dbReference type="GO" id="GO:0033797">
    <property type="term" value="F:selenate reductase activity"/>
    <property type="evidence" value="ECO:0000314"/>
    <property type="project" value="RGD"/>
</dbReference>
<dbReference type="GO" id="GO:0004791">
    <property type="term" value="F:thioredoxin-disulfide reductase (NADPH) activity"/>
    <property type="evidence" value="ECO:0000314"/>
    <property type="project" value="UniProtKB"/>
</dbReference>
<dbReference type="GO" id="GO:0042537">
    <property type="term" value="P:benzene-containing compound metabolic process"/>
    <property type="evidence" value="ECO:0000314"/>
    <property type="project" value="RGD"/>
</dbReference>
<dbReference type="GO" id="GO:0008283">
    <property type="term" value="P:cell population proliferation"/>
    <property type="evidence" value="ECO:0000266"/>
    <property type="project" value="RGD"/>
</dbReference>
<dbReference type="GO" id="GO:0045454">
    <property type="term" value="P:cell redox homeostasis"/>
    <property type="evidence" value="ECO:0000318"/>
    <property type="project" value="GO_Central"/>
</dbReference>
<dbReference type="GO" id="GO:0071280">
    <property type="term" value="P:cellular response to copper ion"/>
    <property type="evidence" value="ECO:0000270"/>
    <property type="project" value="RGD"/>
</dbReference>
<dbReference type="GO" id="GO:0071455">
    <property type="term" value="P:cellular response to hyperoxia"/>
    <property type="evidence" value="ECO:0000270"/>
    <property type="project" value="RGD"/>
</dbReference>
<dbReference type="GO" id="GO:0007369">
    <property type="term" value="P:gastrulation"/>
    <property type="evidence" value="ECO:0000266"/>
    <property type="project" value="RGD"/>
</dbReference>
<dbReference type="GO" id="GO:0070276">
    <property type="term" value="P:halogen metabolic process"/>
    <property type="evidence" value="ECO:0000270"/>
    <property type="project" value="RGD"/>
</dbReference>
<dbReference type="GO" id="GO:0042744">
    <property type="term" value="P:hydrogen peroxide catabolic process"/>
    <property type="evidence" value="ECO:0000315"/>
    <property type="project" value="RGD"/>
</dbReference>
<dbReference type="GO" id="GO:0001707">
    <property type="term" value="P:mesoderm formation"/>
    <property type="evidence" value="ECO:0000266"/>
    <property type="project" value="RGD"/>
</dbReference>
<dbReference type="GO" id="GO:0043065">
    <property type="term" value="P:positive regulation of apoptotic process"/>
    <property type="evidence" value="ECO:0000315"/>
    <property type="project" value="RGD"/>
</dbReference>
<dbReference type="GO" id="GO:0048678">
    <property type="term" value="P:response to axon injury"/>
    <property type="evidence" value="ECO:0000270"/>
    <property type="project" value="RGD"/>
</dbReference>
<dbReference type="GO" id="GO:0055093">
    <property type="term" value="P:response to hyperoxia"/>
    <property type="evidence" value="ECO:0000270"/>
    <property type="project" value="RGD"/>
</dbReference>
<dbReference type="GO" id="GO:0006979">
    <property type="term" value="P:response to oxidative stress"/>
    <property type="evidence" value="ECO:0000314"/>
    <property type="project" value="RGD"/>
</dbReference>
<dbReference type="GO" id="GO:0010269">
    <property type="term" value="P:response to selenium ion"/>
    <property type="evidence" value="ECO:0000270"/>
    <property type="project" value="RGD"/>
</dbReference>
<dbReference type="GO" id="GO:0009410">
    <property type="term" value="P:response to xenobiotic stimulus"/>
    <property type="evidence" value="ECO:0000270"/>
    <property type="project" value="RGD"/>
</dbReference>
<dbReference type="GO" id="GO:0016259">
    <property type="term" value="P:selenocysteine metabolic process"/>
    <property type="evidence" value="ECO:0000315"/>
    <property type="project" value="RGD"/>
</dbReference>
<dbReference type="FunFam" id="3.50.50.60:FF:000190">
    <property type="entry name" value="Thioredoxin reductase"/>
    <property type="match status" value="1"/>
</dbReference>
<dbReference type="FunFam" id="3.30.390.30:FF:000004">
    <property type="entry name" value="Thioredoxin reductase 1, cytoplasmic"/>
    <property type="match status" value="1"/>
</dbReference>
<dbReference type="Gene3D" id="3.30.390.30">
    <property type="match status" value="1"/>
</dbReference>
<dbReference type="Gene3D" id="3.50.50.60">
    <property type="entry name" value="FAD/NAD(P)-binding domain"/>
    <property type="match status" value="2"/>
</dbReference>
<dbReference type="InterPro" id="IPR036188">
    <property type="entry name" value="FAD/NAD-bd_sf"/>
</dbReference>
<dbReference type="InterPro" id="IPR023753">
    <property type="entry name" value="FAD/NAD-binding_dom"/>
</dbReference>
<dbReference type="InterPro" id="IPR016156">
    <property type="entry name" value="FAD/NAD-linked_Rdtase_dimer_sf"/>
</dbReference>
<dbReference type="InterPro" id="IPR046952">
    <property type="entry name" value="GSHR/TRXR-like"/>
</dbReference>
<dbReference type="InterPro" id="IPR001100">
    <property type="entry name" value="Pyr_nuc-diS_OxRdtase"/>
</dbReference>
<dbReference type="InterPro" id="IPR004099">
    <property type="entry name" value="Pyr_nucl-diS_OxRdtase_dimer"/>
</dbReference>
<dbReference type="InterPro" id="IPR012999">
    <property type="entry name" value="Pyr_OxRdtase_I_AS"/>
</dbReference>
<dbReference type="InterPro" id="IPR006338">
    <property type="entry name" value="Thioredoxin/glutathione_Rdtase"/>
</dbReference>
<dbReference type="NCBIfam" id="TIGR01438">
    <property type="entry name" value="TGR"/>
    <property type="match status" value="1"/>
</dbReference>
<dbReference type="PANTHER" id="PTHR42737">
    <property type="entry name" value="GLUTATHIONE REDUCTASE"/>
    <property type="match status" value="1"/>
</dbReference>
<dbReference type="PANTHER" id="PTHR42737:SF8">
    <property type="entry name" value="THIOREDOXIN-DISULFIDE REDUCTASE"/>
    <property type="match status" value="1"/>
</dbReference>
<dbReference type="Pfam" id="PF07992">
    <property type="entry name" value="Pyr_redox_2"/>
    <property type="match status" value="1"/>
</dbReference>
<dbReference type="Pfam" id="PF02852">
    <property type="entry name" value="Pyr_redox_dim"/>
    <property type="match status" value="1"/>
</dbReference>
<dbReference type="PIRSF" id="PIRSF000350">
    <property type="entry name" value="Mercury_reductase_MerA"/>
    <property type="match status" value="1"/>
</dbReference>
<dbReference type="PRINTS" id="PR00368">
    <property type="entry name" value="FADPNR"/>
</dbReference>
<dbReference type="PRINTS" id="PR00411">
    <property type="entry name" value="PNDRDTASEI"/>
</dbReference>
<dbReference type="SUPFAM" id="SSF51905">
    <property type="entry name" value="FAD/NAD(P)-binding domain"/>
    <property type="match status" value="1"/>
</dbReference>
<dbReference type="SUPFAM" id="SSF55424">
    <property type="entry name" value="FAD/NAD-linked reductases, dimerisation (C-terminal) domain"/>
    <property type="match status" value="1"/>
</dbReference>
<dbReference type="PROSITE" id="PS00076">
    <property type="entry name" value="PYRIDINE_REDOX_1"/>
    <property type="match status" value="1"/>
</dbReference>
<organism>
    <name type="scientific">Rattus norvegicus</name>
    <name type="common">Rat</name>
    <dbReference type="NCBI Taxonomy" id="10116"/>
    <lineage>
        <taxon>Eukaryota</taxon>
        <taxon>Metazoa</taxon>
        <taxon>Chordata</taxon>
        <taxon>Craniata</taxon>
        <taxon>Vertebrata</taxon>
        <taxon>Euteleostomi</taxon>
        <taxon>Mammalia</taxon>
        <taxon>Eutheria</taxon>
        <taxon>Euarchontoglires</taxon>
        <taxon>Glires</taxon>
        <taxon>Rodentia</taxon>
        <taxon>Myomorpha</taxon>
        <taxon>Muroidea</taxon>
        <taxon>Muridae</taxon>
        <taxon>Murinae</taxon>
        <taxon>Rattus</taxon>
    </lineage>
</organism>